<accession>P27497</accession>
<keyword id="KW-0007">Acetylation</keyword>
<keyword id="KW-0148">Chlorophyll</keyword>
<keyword id="KW-0150">Chloroplast</keyword>
<keyword id="KW-0157">Chromophore</keyword>
<keyword id="KW-0460">Magnesium</keyword>
<keyword id="KW-0472">Membrane</keyword>
<keyword id="KW-0479">Metal-binding</keyword>
<keyword id="KW-0597">Phosphoprotein</keyword>
<keyword id="KW-0602">Photosynthesis</keyword>
<keyword id="KW-0603">Photosystem I</keyword>
<keyword id="KW-0604">Photosystem II</keyword>
<keyword id="KW-0934">Plastid</keyword>
<keyword id="KW-1185">Reference proteome</keyword>
<keyword id="KW-0793">Thylakoid</keyword>
<keyword id="KW-0809">Transit peptide</keyword>
<keyword id="KW-0812">Transmembrane</keyword>
<keyword id="KW-1133">Transmembrane helix</keyword>
<evidence type="ECO:0000250" key="1"/>
<evidence type="ECO:0000250" key="2">
    <source>
        <dbReference type="UniProtKB" id="P07371"/>
    </source>
</evidence>
<evidence type="ECO:0000250" key="3">
    <source>
        <dbReference type="UniProtKB" id="P12333"/>
    </source>
</evidence>
<evidence type="ECO:0000255" key="4"/>
<evidence type="ECO:0000305" key="5"/>
<name>CB29_MAIZE</name>
<proteinExistence type="evidence at transcript level"/>
<feature type="transit peptide" description="Chloroplast" evidence="5">
    <location>
        <begin position="1"/>
        <end position="32"/>
    </location>
</feature>
<feature type="chain" id="PRO_0000003672" description="Chlorophyll a-b binding protein M9, chloroplastic">
    <location>
        <begin position="33"/>
        <end position="265"/>
    </location>
</feature>
<feature type="transmembrane region" description="Helical" evidence="4">
    <location>
        <begin position="99"/>
        <end position="119"/>
    </location>
</feature>
<feature type="transmembrane region" description="Helical" evidence="4">
    <location>
        <begin position="151"/>
        <end position="171"/>
    </location>
</feature>
<feature type="transmembrane region" description="Helical" evidence="4">
    <location>
        <begin position="219"/>
        <end position="239"/>
    </location>
</feature>
<feature type="binding site" description="axial binding residue" evidence="3">
    <location>
        <position position="57"/>
    </location>
    <ligand>
        <name>chlorophyll b</name>
        <dbReference type="ChEBI" id="CHEBI:61721"/>
        <label>1</label>
    </ligand>
    <ligandPart>
        <name>Mg</name>
        <dbReference type="ChEBI" id="CHEBI:25107"/>
    </ligandPart>
</feature>
<feature type="binding site" evidence="1">
    <location>
        <position position="79"/>
    </location>
    <ligand>
        <name>chlorophyll a</name>
        <dbReference type="ChEBI" id="CHEBI:58416"/>
        <label>1</label>
    </ligand>
</feature>
<feature type="binding site" evidence="1">
    <location>
        <position position="85"/>
    </location>
    <ligand>
        <name>chlorophyll a</name>
        <dbReference type="ChEBI" id="CHEBI:58416"/>
        <label>1</label>
    </ligand>
</feature>
<feature type="binding site" description="axial binding residue" evidence="3">
    <location>
        <position position="98"/>
    </location>
    <ligand>
        <name>chlorophyll a</name>
        <dbReference type="ChEBI" id="CHEBI:58416"/>
        <label>1</label>
    </ligand>
    <ligandPart>
        <name>Mg</name>
        <dbReference type="ChEBI" id="CHEBI:25107"/>
    </ligandPart>
</feature>
<feature type="binding site" description="axial binding residue" evidence="3">
    <location>
        <position position="101"/>
    </location>
    <ligand>
        <name>chlorophyll a</name>
        <dbReference type="ChEBI" id="CHEBI:58416"/>
        <label>2</label>
    </ligand>
    <ligandPart>
        <name>Mg</name>
        <dbReference type="ChEBI" id="CHEBI:25107"/>
    </ligandPart>
</feature>
<feature type="binding site" evidence="1">
    <location>
        <position position="103"/>
    </location>
    <ligand>
        <name>chlorophyll b</name>
        <dbReference type="ChEBI" id="CHEBI:61721"/>
        <label>2</label>
    </ligand>
</feature>
<feature type="binding site" evidence="1">
    <location>
        <position position="136"/>
    </location>
    <ligand>
        <name>chlorophyll a</name>
        <dbReference type="ChEBI" id="CHEBI:58416"/>
        <label>3</label>
    </ligand>
</feature>
<feature type="binding site" evidence="1">
    <location>
        <position position="146"/>
    </location>
    <ligand>
        <name>chlorophyll a</name>
        <dbReference type="ChEBI" id="CHEBI:58416"/>
        <label>3</label>
    </ligand>
</feature>
<feature type="binding site" description="axial binding residue" evidence="1">
    <location>
        <position position="152"/>
    </location>
    <ligand>
        <name>chlorophyll b</name>
        <dbReference type="ChEBI" id="CHEBI:61721"/>
        <label>2</label>
    </ligand>
    <ligandPart>
        <name>Mg</name>
        <dbReference type="ChEBI" id="CHEBI:25107"/>
    </ligandPart>
</feature>
<feature type="binding site" evidence="1">
    <location>
        <position position="156"/>
    </location>
    <ligand>
        <name>chlorophyll b</name>
        <dbReference type="ChEBI" id="CHEBI:61721"/>
        <label>3</label>
    </ligand>
</feature>
<feature type="binding site" evidence="1">
    <location>
        <position position="164"/>
    </location>
    <ligand>
        <name>chlorophyll b</name>
        <dbReference type="ChEBI" id="CHEBI:61721"/>
        <label>4</label>
    </ligand>
</feature>
<feature type="binding site" evidence="2">
    <location>
        <position position="164"/>
    </location>
    <ligand>
        <name>chlorophyll b</name>
        <dbReference type="ChEBI" id="CHEBI:61721"/>
        <label>5</label>
    </ligand>
</feature>
<feature type="binding site" description="axial binding residue" evidence="3">
    <location>
        <position position="172"/>
    </location>
    <ligand>
        <name>chlorophyll b</name>
        <dbReference type="ChEBI" id="CHEBI:61721"/>
        <label>3</label>
    </ligand>
    <ligandPart>
        <name>Mg</name>
        <dbReference type="ChEBI" id="CHEBI:25107"/>
    </ligandPart>
</feature>
<feature type="binding site" evidence="1">
    <location>
        <position position="175"/>
    </location>
    <ligand>
        <name>chlorophyll b</name>
        <dbReference type="ChEBI" id="CHEBI:61721"/>
        <label>4</label>
    </ligand>
</feature>
<feature type="binding site" evidence="1">
    <location>
        <position position="181"/>
    </location>
    <ligand>
        <name>chlorophyll b</name>
        <dbReference type="ChEBI" id="CHEBI:61721"/>
        <label>2</label>
    </ligand>
</feature>
<feature type="binding site" evidence="1">
    <location>
        <position position="212"/>
    </location>
    <ligand>
        <name>chlorophyll a</name>
        <dbReference type="ChEBI" id="CHEBI:58416"/>
        <label>5</label>
    </ligand>
</feature>
<feature type="binding site" description="axial binding residue" evidence="3">
    <location>
        <position position="213"/>
    </location>
    <ligand>
        <name>chlorophyll a</name>
        <dbReference type="ChEBI" id="CHEBI:58416"/>
        <label>3</label>
    </ligand>
    <ligandPart>
        <name>Mg</name>
        <dbReference type="ChEBI" id="CHEBI:25107"/>
    </ligandPart>
</feature>
<feature type="binding site" description="axial binding residue" evidence="3">
    <location>
        <position position="216"/>
    </location>
    <ligand>
        <name>chlorophyll a</name>
        <dbReference type="ChEBI" id="CHEBI:58416"/>
        <label>4</label>
    </ligand>
    <ligandPart>
        <name>Mg</name>
        <dbReference type="ChEBI" id="CHEBI:25107"/>
    </ligandPart>
</feature>
<feature type="binding site" evidence="1">
    <location>
        <position position="218"/>
    </location>
    <ligand>
        <name>chlorophyll a</name>
        <dbReference type="ChEBI" id="CHEBI:58416"/>
        <label>1</label>
    </ligand>
</feature>
<feature type="binding site" description="axial binding residue" evidence="3">
    <location>
        <position position="230"/>
    </location>
    <ligand>
        <name>chlorophyll a</name>
        <dbReference type="ChEBI" id="CHEBI:58416"/>
        <label>5</label>
    </ligand>
    <ligandPart>
        <name>Mg</name>
        <dbReference type="ChEBI" id="CHEBI:25107"/>
    </ligandPart>
</feature>
<feature type="binding site" description="axial binding residue" evidence="3">
    <location>
        <position position="245"/>
    </location>
    <ligand>
        <name>chlorophyll a</name>
        <dbReference type="ChEBI" id="CHEBI:58416"/>
        <label>6</label>
    </ligand>
    <ligandPart>
        <name>Mg</name>
        <dbReference type="ChEBI" id="CHEBI:25107"/>
    </ligandPart>
</feature>
<feature type="binding site" evidence="1">
    <location>
        <position position="254"/>
    </location>
    <ligand>
        <name>chlorophyll a</name>
        <dbReference type="ChEBI" id="CHEBI:58416"/>
        <label>6</label>
    </ligand>
</feature>
<feature type="binding site" evidence="1">
    <location>
        <position position="261"/>
    </location>
    <ligand>
        <name>chlorophyll b</name>
        <dbReference type="ChEBI" id="CHEBI:61721"/>
        <label>5</label>
    </ligand>
</feature>
<feature type="modified residue" description="N2-acetylarginine" evidence="1">
    <location>
        <position position="33"/>
    </location>
</feature>
<feature type="modified residue" description="Phosphothreonine" evidence="1">
    <location>
        <position position="35"/>
    </location>
</feature>
<comment type="function">
    <text>The light-harvesting complex (LHC) functions as a light receptor, it captures and delivers excitation energy to photosystems with which it is closely associated.</text>
</comment>
<comment type="cofactor">
    <text evidence="1">Binds at least 14 chlorophylls (8 Chl-a and 6 Chl-b) and carotenoids such as lutein and neoxanthin.</text>
</comment>
<comment type="subunit">
    <text>The LHC complex consists of chlorophyll a-b binding proteins.</text>
</comment>
<comment type="subcellular location">
    <subcellularLocation>
        <location>Plastid</location>
        <location>Chloroplast thylakoid membrane</location>
        <topology>Multi-pass membrane protein</topology>
    </subcellularLocation>
</comment>
<comment type="domain">
    <text>The N-terminus of the protein extends into the stroma where it is involved with adhesion of granal membranes and post-translational modifications; both are believed to mediate the distribution of excitation energy between photosystems I and II.</text>
</comment>
<comment type="PTM">
    <text evidence="1">Photoregulated by reversible phosphorylation of its threonine residues.</text>
</comment>
<comment type="similarity">
    <text evidence="5">Belongs to the light-harvesting chlorophyll a/b-binding (LHC) protein family.</text>
</comment>
<sequence>MASSTMALSSTAFAGKAVNVPSSLFGEARVTMRKTAAKAKPAASSGSPWYGPDRVLYLGPLSGEPPSYLTGEFPGDYGWDTAGLSADPETFAKNRELEVIHSRWAMLGALGCVFPELLARNGVKFGEAVWFKAGSQIFSEGGLDYLGNPSLIHAQSILAIWACQVVLMGAIEGYRVAGGPLGEVVDPLYPGGTFDPLGLADDPEAFADVKVKELKNGRLAMFSMFGFFVQAIVTGKGPLENLADHLADPVNNNAWAYATNFVPGK</sequence>
<gene>
    <name type="primary">CAB-M9</name>
</gene>
<protein>
    <recommendedName>
        <fullName>Chlorophyll a-b binding protein M9, chloroplastic</fullName>
    </recommendedName>
    <alternativeName>
        <fullName>LHCII type I CAB-M9</fullName>
        <shortName>LHCP</shortName>
    </alternativeName>
</protein>
<dbReference type="EMBL" id="X55892">
    <property type="protein sequence ID" value="CAA39376.1"/>
    <property type="molecule type" value="mRNA"/>
</dbReference>
<dbReference type="PIR" id="S13098">
    <property type="entry name" value="S13098"/>
</dbReference>
<dbReference type="RefSeq" id="NP_001105545.1">
    <property type="nucleotide sequence ID" value="NM_001112075.1"/>
</dbReference>
<dbReference type="SMR" id="P27497"/>
<dbReference type="FunCoup" id="P27497">
    <property type="interactions" value="971"/>
</dbReference>
<dbReference type="STRING" id="4577.P27497"/>
<dbReference type="PaxDb" id="4577-GRMZM2G155216_P02"/>
<dbReference type="GeneID" id="542530"/>
<dbReference type="KEGG" id="zma:542530"/>
<dbReference type="MaizeGDB" id="61648"/>
<dbReference type="eggNOG" id="ENOG502QPU1">
    <property type="taxonomic scope" value="Eukaryota"/>
</dbReference>
<dbReference type="InParanoid" id="P27497"/>
<dbReference type="OrthoDB" id="423598at2759"/>
<dbReference type="Proteomes" id="UP000007305">
    <property type="component" value="Unplaced"/>
</dbReference>
<dbReference type="ExpressionAtlas" id="P27497">
    <property type="expression patterns" value="baseline and differential"/>
</dbReference>
<dbReference type="GO" id="GO:0009535">
    <property type="term" value="C:chloroplast thylakoid membrane"/>
    <property type="evidence" value="ECO:0000318"/>
    <property type="project" value="GO_Central"/>
</dbReference>
<dbReference type="GO" id="GO:0009522">
    <property type="term" value="C:photosystem I"/>
    <property type="evidence" value="ECO:0007669"/>
    <property type="project" value="UniProtKB-KW"/>
</dbReference>
<dbReference type="GO" id="GO:0009523">
    <property type="term" value="C:photosystem II"/>
    <property type="evidence" value="ECO:0007669"/>
    <property type="project" value="UniProtKB-KW"/>
</dbReference>
<dbReference type="GO" id="GO:0016168">
    <property type="term" value="F:chlorophyll binding"/>
    <property type="evidence" value="ECO:0007669"/>
    <property type="project" value="UniProtKB-KW"/>
</dbReference>
<dbReference type="GO" id="GO:0046872">
    <property type="term" value="F:metal ion binding"/>
    <property type="evidence" value="ECO:0007669"/>
    <property type="project" value="UniProtKB-KW"/>
</dbReference>
<dbReference type="GO" id="GO:0009768">
    <property type="term" value="P:photosynthesis, light harvesting in photosystem I"/>
    <property type="evidence" value="ECO:0000318"/>
    <property type="project" value="GO_Central"/>
</dbReference>
<dbReference type="GO" id="GO:0009416">
    <property type="term" value="P:response to light stimulus"/>
    <property type="evidence" value="ECO:0000318"/>
    <property type="project" value="GO_Central"/>
</dbReference>
<dbReference type="FunFam" id="1.10.3460.10:FF:000001">
    <property type="entry name" value="Chlorophyll a-b binding protein, chloroplastic"/>
    <property type="match status" value="1"/>
</dbReference>
<dbReference type="Gene3D" id="1.10.3460.10">
    <property type="entry name" value="Chlorophyll a/b binding protein domain"/>
    <property type="match status" value="1"/>
</dbReference>
<dbReference type="InterPro" id="IPR001344">
    <property type="entry name" value="Chloro_AB-bd_pln"/>
</dbReference>
<dbReference type="InterPro" id="IPR022796">
    <property type="entry name" value="Chloroa_b-bind"/>
</dbReference>
<dbReference type="PANTHER" id="PTHR21649">
    <property type="entry name" value="CHLOROPHYLL A/B BINDING PROTEIN"/>
    <property type="match status" value="1"/>
</dbReference>
<dbReference type="Pfam" id="PF00504">
    <property type="entry name" value="Chloroa_b-bind"/>
    <property type="match status" value="1"/>
</dbReference>
<dbReference type="SUPFAM" id="SSF103511">
    <property type="entry name" value="Chlorophyll a-b binding protein"/>
    <property type="match status" value="1"/>
</dbReference>
<reference key="1">
    <citation type="journal article" date="1990" name="Nucleic Acids Res.">
        <title>Nucleotide sequence of a maize cDNA coding for a light-harvesting chlorophyll a/b binding protein of photosystem II.</title>
        <authorList>
            <person name="Viret J.F."/>
            <person name="Schantz M.L."/>
            <person name="Schantz R."/>
        </authorList>
    </citation>
    <scope>NUCLEOTIDE SEQUENCE [MRNA]</scope>
    <source>
        <strain>cv. Wisconsin 22</strain>
    </source>
</reference>
<organism>
    <name type="scientific">Zea mays</name>
    <name type="common">Maize</name>
    <dbReference type="NCBI Taxonomy" id="4577"/>
    <lineage>
        <taxon>Eukaryota</taxon>
        <taxon>Viridiplantae</taxon>
        <taxon>Streptophyta</taxon>
        <taxon>Embryophyta</taxon>
        <taxon>Tracheophyta</taxon>
        <taxon>Spermatophyta</taxon>
        <taxon>Magnoliopsida</taxon>
        <taxon>Liliopsida</taxon>
        <taxon>Poales</taxon>
        <taxon>Poaceae</taxon>
        <taxon>PACMAD clade</taxon>
        <taxon>Panicoideae</taxon>
        <taxon>Andropogonodae</taxon>
        <taxon>Andropogoneae</taxon>
        <taxon>Tripsacinae</taxon>
        <taxon>Zea</taxon>
    </lineage>
</organism>